<accession>Q86IJ5</accession>
<accession>Q559F7</accession>
<reference key="1">
    <citation type="journal article" date="2002" name="Nature">
        <title>Sequence and analysis of chromosome 2 of Dictyostelium discoideum.</title>
        <authorList>
            <person name="Gloeckner G."/>
            <person name="Eichinger L."/>
            <person name="Szafranski K."/>
            <person name="Pachebat J.A."/>
            <person name="Bankier A.T."/>
            <person name="Dear P.H."/>
            <person name="Lehmann R."/>
            <person name="Baumgart C."/>
            <person name="Parra G."/>
            <person name="Abril J.F."/>
            <person name="Guigo R."/>
            <person name="Kumpf K."/>
            <person name="Tunggal B."/>
            <person name="Cox E.C."/>
            <person name="Quail M.A."/>
            <person name="Platzer M."/>
            <person name="Rosenthal A."/>
            <person name="Noegel A.A."/>
        </authorList>
    </citation>
    <scope>NUCLEOTIDE SEQUENCE [LARGE SCALE GENOMIC DNA]</scope>
    <source>
        <strain>AX4</strain>
    </source>
</reference>
<reference key="2">
    <citation type="journal article" date="2005" name="Nature">
        <title>The genome of the social amoeba Dictyostelium discoideum.</title>
        <authorList>
            <person name="Eichinger L."/>
            <person name="Pachebat J.A."/>
            <person name="Gloeckner G."/>
            <person name="Rajandream M.A."/>
            <person name="Sucgang R."/>
            <person name="Berriman M."/>
            <person name="Song J."/>
            <person name="Olsen R."/>
            <person name="Szafranski K."/>
            <person name="Xu Q."/>
            <person name="Tunggal B."/>
            <person name="Kummerfeld S."/>
            <person name="Madera M."/>
            <person name="Konfortov B.A."/>
            <person name="Rivero F."/>
            <person name="Bankier A.T."/>
            <person name="Lehmann R."/>
            <person name="Hamlin N."/>
            <person name="Davies R."/>
            <person name="Gaudet P."/>
            <person name="Fey P."/>
            <person name="Pilcher K."/>
            <person name="Chen G."/>
            <person name="Saunders D."/>
            <person name="Sodergren E.J."/>
            <person name="Davis P."/>
            <person name="Kerhornou A."/>
            <person name="Nie X."/>
            <person name="Hall N."/>
            <person name="Anjard C."/>
            <person name="Hemphill L."/>
            <person name="Bason N."/>
            <person name="Farbrother P."/>
            <person name="Desany B."/>
            <person name="Just E."/>
            <person name="Morio T."/>
            <person name="Rost R."/>
            <person name="Churcher C.M."/>
            <person name="Cooper J."/>
            <person name="Haydock S."/>
            <person name="van Driessche N."/>
            <person name="Cronin A."/>
            <person name="Goodhead I."/>
            <person name="Muzny D.M."/>
            <person name="Mourier T."/>
            <person name="Pain A."/>
            <person name="Lu M."/>
            <person name="Harper D."/>
            <person name="Lindsay R."/>
            <person name="Hauser H."/>
            <person name="James K.D."/>
            <person name="Quiles M."/>
            <person name="Madan Babu M."/>
            <person name="Saito T."/>
            <person name="Buchrieser C."/>
            <person name="Wardroper A."/>
            <person name="Felder M."/>
            <person name="Thangavelu M."/>
            <person name="Johnson D."/>
            <person name="Knights A."/>
            <person name="Loulseged H."/>
            <person name="Mungall K.L."/>
            <person name="Oliver K."/>
            <person name="Price C."/>
            <person name="Quail M.A."/>
            <person name="Urushihara H."/>
            <person name="Hernandez J."/>
            <person name="Rabbinowitsch E."/>
            <person name="Steffen D."/>
            <person name="Sanders M."/>
            <person name="Ma J."/>
            <person name="Kohara Y."/>
            <person name="Sharp S."/>
            <person name="Simmonds M.N."/>
            <person name="Spiegler S."/>
            <person name="Tivey A."/>
            <person name="Sugano S."/>
            <person name="White B."/>
            <person name="Walker D."/>
            <person name="Woodward J.R."/>
            <person name="Winckler T."/>
            <person name="Tanaka Y."/>
            <person name="Shaulsky G."/>
            <person name="Schleicher M."/>
            <person name="Weinstock G.M."/>
            <person name="Rosenthal A."/>
            <person name="Cox E.C."/>
            <person name="Chisholm R.L."/>
            <person name="Gibbs R.A."/>
            <person name="Loomis W.F."/>
            <person name="Platzer M."/>
            <person name="Kay R.R."/>
            <person name="Williams J.G."/>
            <person name="Dear P.H."/>
            <person name="Noegel A.A."/>
            <person name="Barrell B.G."/>
            <person name="Kuspa A."/>
        </authorList>
    </citation>
    <scope>NUCLEOTIDE SEQUENCE [LARGE SCALE GENOMIC DNA]</scope>
    <source>
        <strain>AX4</strain>
    </source>
</reference>
<protein>
    <recommendedName>
        <fullName>Uncharacterized protein DDB_G0272718</fullName>
    </recommendedName>
</protein>
<dbReference type="EMBL" id="AAFI02000008">
    <property type="protein sequence ID" value="EAL70996.1"/>
    <property type="molecule type" value="Genomic_DNA"/>
</dbReference>
<dbReference type="RefSeq" id="XP_644859.1">
    <property type="nucleotide sequence ID" value="XM_639767.1"/>
</dbReference>
<dbReference type="PaxDb" id="44689-DDB0238290"/>
<dbReference type="EnsemblProtists" id="EAL70996">
    <property type="protein sequence ID" value="EAL70996"/>
    <property type="gene ID" value="DDB_G0272718"/>
</dbReference>
<dbReference type="GeneID" id="8618538"/>
<dbReference type="KEGG" id="ddi:DDB_G0272718"/>
<dbReference type="dictyBase" id="DDB_G0272718"/>
<dbReference type="HOGENOM" id="CLU_189481_0_0_1"/>
<dbReference type="InParanoid" id="Q86IJ5"/>
<dbReference type="PRO" id="PR:Q86IJ5"/>
<dbReference type="Proteomes" id="UP000002195">
    <property type="component" value="Chromosome 2"/>
</dbReference>
<dbReference type="GO" id="GO:0006950">
    <property type="term" value="P:response to stress"/>
    <property type="evidence" value="ECO:0000318"/>
    <property type="project" value="GO_Central"/>
</dbReference>
<sequence>MPPHGHHHHHHGHHGHHEHITITPVYAPPQVVQPIYAPPPVVQPVYVQPPVVYPQATIVLETGHHHGHHHHHGHHGHHDHHHHGHHGHH</sequence>
<evidence type="ECO:0000256" key="1">
    <source>
        <dbReference type="SAM" id="MobiDB-lite"/>
    </source>
</evidence>
<keyword id="KW-1185">Reference proteome</keyword>
<gene>
    <name type="ORF">DDB_G0272718</name>
</gene>
<feature type="chain" id="PRO_0000348152" description="Uncharacterized protein DDB_G0272718">
    <location>
        <begin position="1"/>
        <end position="89"/>
    </location>
</feature>
<feature type="region of interest" description="Disordered" evidence="1">
    <location>
        <begin position="1"/>
        <end position="25"/>
    </location>
</feature>
<feature type="region of interest" description="Disordered" evidence="1">
    <location>
        <begin position="60"/>
        <end position="89"/>
    </location>
</feature>
<feature type="compositionally biased region" description="Basic residues" evidence="1">
    <location>
        <begin position="1"/>
        <end position="17"/>
    </location>
</feature>
<feature type="compositionally biased region" description="Basic residues" evidence="1">
    <location>
        <begin position="65"/>
        <end position="89"/>
    </location>
</feature>
<organism>
    <name type="scientific">Dictyostelium discoideum</name>
    <name type="common">Social amoeba</name>
    <dbReference type="NCBI Taxonomy" id="44689"/>
    <lineage>
        <taxon>Eukaryota</taxon>
        <taxon>Amoebozoa</taxon>
        <taxon>Evosea</taxon>
        <taxon>Eumycetozoa</taxon>
        <taxon>Dictyostelia</taxon>
        <taxon>Dictyosteliales</taxon>
        <taxon>Dictyosteliaceae</taxon>
        <taxon>Dictyostelium</taxon>
    </lineage>
</organism>
<proteinExistence type="predicted"/>
<name>Y8290_DICDI</name>